<name>RIPL_DROME</name>
<dbReference type="EMBL" id="AE014298">
    <property type="protein sequence ID" value="AAF45619.1"/>
    <property type="molecule type" value="Genomic_DNA"/>
</dbReference>
<dbReference type="EMBL" id="AL023893">
    <property type="protein sequence ID" value="CAA19654.1"/>
    <property type="molecule type" value="Genomic_DNA"/>
</dbReference>
<dbReference type="EMBL" id="AY060341">
    <property type="protein sequence ID" value="AAL25380.1"/>
    <property type="molecule type" value="mRNA"/>
</dbReference>
<dbReference type="RefSeq" id="NP_569910.1">
    <property type="nucleotide sequence ID" value="NM_130554.3"/>
</dbReference>
<dbReference type="SMR" id="O76878"/>
<dbReference type="BioGRID" id="57648">
    <property type="interactions" value="17"/>
</dbReference>
<dbReference type="FunCoup" id="O76878">
    <property type="interactions" value="314"/>
</dbReference>
<dbReference type="IntAct" id="O76878">
    <property type="interactions" value="18"/>
</dbReference>
<dbReference type="STRING" id="7227.FBpp0304571"/>
<dbReference type="GlyGen" id="O76878">
    <property type="glycosylation" value="1 site"/>
</dbReference>
<dbReference type="PaxDb" id="7227-FBpp0304571"/>
<dbReference type="DNASU" id="31090"/>
<dbReference type="EnsemblMetazoa" id="FBtr0070225">
    <property type="protein sequence ID" value="FBpp0070216"/>
    <property type="gene ID" value="FBgn0024985"/>
</dbReference>
<dbReference type="GeneID" id="31090"/>
<dbReference type="KEGG" id="dme:Dmel_CG11448"/>
<dbReference type="UCSC" id="CG11448-RA">
    <property type="organism name" value="d. melanogaster"/>
</dbReference>
<dbReference type="AGR" id="FB:FBgn0024985"/>
<dbReference type="CTD" id="31090"/>
<dbReference type="FlyBase" id="FBgn0024985">
    <property type="gene designation" value="Rilpl"/>
</dbReference>
<dbReference type="VEuPathDB" id="VectorBase:FBgn0024985"/>
<dbReference type="eggNOG" id="ENOG502QR9G">
    <property type="taxonomic scope" value="Eukaryota"/>
</dbReference>
<dbReference type="GeneTree" id="ENSGT00940000169426"/>
<dbReference type="InParanoid" id="O76878"/>
<dbReference type="OrthoDB" id="10069524at2759"/>
<dbReference type="PhylomeDB" id="O76878"/>
<dbReference type="SignaLink" id="O76878"/>
<dbReference type="BioGRID-ORCS" id="31090">
    <property type="hits" value="0 hits in 3 CRISPR screens"/>
</dbReference>
<dbReference type="ChiTaRS" id="CG11448">
    <property type="organism name" value="fly"/>
</dbReference>
<dbReference type="GenomeRNAi" id="31090"/>
<dbReference type="PRO" id="PR:O76878"/>
<dbReference type="Proteomes" id="UP000000803">
    <property type="component" value="Chromosome X"/>
</dbReference>
<dbReference type="Bgee" id="FBgn0024985">
    <property type="expression patterns" value="Expressed in adult olfactory receptor neuron Or92a (Drosophila) in antenna and 263 other cell types or tissues"/>
</dbReference>
<dbReference type="ExpressionAtlas" id="O76878">
    <property type="expression patterns" value="baseline and differential"/>
</dbReference>
<dbReference type="GO" id="GO:0036064">
    <property type="term" value="C:ciliary basal body"/>
    <property type="evidence" value="ECO:0000318"/>
    <property type="project" value="GO_Central"/>
</dbReference>
<dbReference type="GO" id="GO:0005737">
    <property type="term" value="C:cytoplasm"/>
    <property type="evidence" value="ECO:0000318"/>
    <property type="project" value="GO_Central"/>
</dbReference>
<dbReference type="GO" id="GO:0005765">
    <property type="term" value="C:lysosomal membrane"/>
    <property type="evidence" value="ECO:0000314"/>
    <property type="project" value="UniProtKB"/>
</dbReference>
<dbReference type="GO" id="GO:0048471">
    <property type="term" value="C:perinuclear region of cytoplasm"/>
    <property type="evidence" value="ECO:0000314"/>
    <property type="project" value="UniProtKB"/>
</dbReference>
<dbReference type="GO" id="GO:0051959">
    <property type="term" value="F:dynein light intermediate chain binding"/>
    <property type="evidence" value="ECO:0000318"/>
    <property type="project" value="GO_Central"/>
</dbReference>
<dbReference type="GO" id="GO:0030742">
    <property type="term" value="F:GTP-dependent protein binding"/>
    <property type="evidence" value="ECO:0000353"/>
    <property type="project" value="UniProtKB"/>
</dbReference>
<dbReference type="GO" id="GO:0031267">
    <property type="term" value="F:small GTPase binding"/>
    <property type="evidence" value="ECO:0000318"/>
    <property type="project" value="GO_Central"/>
</dbReference>
<dbReference type="GO" id="GO:0060271">
    <property type="term" value="P:cilium assembly"/>
    <property type="evidence" value="ECO:0000318"/>
    <property type="project" value="GO_Central"/>
</dbReference>
<dbReference type="GO" id="GO:0032418">
    <property type="term" value="P:lysosome localization"/>
    <property type="evidence" value="ECO:0000315"/>
    <property type="project" value="UniProtKB"/>
</dbReference>
<dbReference type="CDD" id="cd14445">
    <property type="entry name" value="RILP-like"/>
    <property type="match status" value="1"/>
</dbReference>
<dbReference type="FunFam" id="1.20.58.1770:FF:000005">
    <property type="entry name" value="RILP-like protein homolog isoform X1"/>
    <property type="match status" value="1"/>
</dbReference>
<dbReference type="Gene3D" id="1.20.58.1770">
    <property type="match status" value="1"/>
</dbReference>
<dbReference type="InterPro" id="IPR051241">
    <property type="entry name" value="DZIP_RILPL"/>
</dbReference>
<dbReference type="InterPro" id="IPR034743">
    <property type="entry name" value="RH1"/>
</dbReference>
<dbReference type="InterPro" id="IPR034744">
    <property type="entry name" value="RH2"/>
</dbReference>
<dbReference type="PANTHER" id="PTHR21502:SF4">
    <property type="entry name" value="RILP-LIKE PROTEIN HOMOLOG"/>
    <property type="match status" value="1"/>
</dbReference>
<dbReference type="PANTHER" id="PTHR21502">
    <property type="entry name" value="ZINC FINGER PROTEIN DZIP1"/>
    <property type="match status" value="1"/>
</dbReference>
<dbReference type="Pfam" id="PF09744">
    <property type="entry name" value="RH1"/>
    <property type="match status" value="1"/>
</dbReference>
<dbReference type="SUPFAM" id="SSF161256">
    <property type="entry name" value="RILP dimerisation region"/>
    <property type="match status" value="1"/>
</dbReference>
<dbReference type="PROSITE" id="PS51776">
    <property type="entry name" value="RH1"/>
    <property type="match status" value="1"/>
</dbReference>
<dbReference type="PROSITE" id="PS51777">
    <property type="entry name" value="RH2"/>
    <property type="match status" value="1"/>
</dbReference>
<proteinExistence type="evidence at protein level"/>
<evidence type="ECO:0000255" key="1"/>
<evidence type="ECO:0000255" key="2">
    <source>
        <dbReference type="PROSITE-ProRule" id="PRU01112"/>
    </source>
</evidence>
<evidence type="ECO:0000255" key="3">
    <source>
        <dbReference type="PROSITE-ProRule" id="PRU01113"/>
    </source>
</evidence>
<evidence type="ECO:0000256" key="4">
    <source>
        <dbReference type="SAM" id="MobiDB-lite"/>
    </source>
</evidence>
<evidence type="ECO:0000269" key="5">
    <source>
    </source>
</evidence>
<evidence type="ECO:0000303" key="6">
    <source>
    </source>
</evidence>
<evidence type="ECO:0000305" key="7"/>
<evidence type="ECO:0000312" key="8">
    <source>
        <dbReference type="FlyBase" id="FBgn0024985"/>
    </source>
</evidence>
<comment type="function">
    <text evidence="5">May have a role in lysosome distribution by interacting with Arl8.</text>
</comment>
<comment type="subunit">
    <text evidence="5">Interacts with Arl8 (in GTP-bound form).</text>
</comment>
<comment type="interaction">
    <interactant intactId="EBI-163187">
        <id>O76878</id>
    </interactant>
    <interactant intactId="EBI-180584">
        <id>Q9VHM7</id>
        <label>nom</label>
    </interactant>
    <organismsDiffer>false</organismsDiffer>
    <experiments>4</experiments>
</comment>
<comment type="subcellular location">
    <subcellularLocation>
        <location evidence="5">Lysosome membrane</location>
    </subcellularLocation>
    <text evidence="5">Localizes to the perinuclear region when associated with Arl8.</text>
</comment>
<comment type="similarity">
    <text evidence="7">Belongs to the RILPL family.</text>
</comment>
<organism>
    <name type="scientific">Drosophila melanogaster</name>
    <name type="common">Fruit fly</name>
    <dbReference type="NCBI Taxonomy" id="7227"/>
    <lineage>
        <taxon>Eukaryota</taxon>
        <taxon>Metazoa</taxon>
        <taxon>Ecdysozoa</taxon>
        <taxon>Arthropoda</taxon>
        <taxon>Hexapoda</taxon>
        <taxon>Insecta</taxon>
        <taxon>Pterygota</taxon>
        <taxon>Neoptera</taxon>
        <taxon>Endopterygota</taxon>
        <taxon>Diptera</taxon>
        <taxon>Brachycera</taxon>
        <taxon>Muscomorpha</taxon>
        <taxon>Ephydroidea</taxon>
        <taxon>Drosophilidae</taxon>
        <taxon>Drosophila</taxon>
        <taxon>Sophophora</taxon>
    </lineage>
</organism>
<gene>
    <name evidence="6 8" type="primary">Rilpl</name>
    <name evidence="8" type="ORF">CG11448</name>
</gene>
<sequence length="443" mass="50147">MPGFHLNEMGEMVLDAIDDIGVVDVYDLASDIGKEYERIMDRFGTDAVSGLMPKIINTLELLEALATKNERENATIQELRDKVAQLESEKLEKAEFRRRFDKELELIEEQWRSETNELVDLVSSLQDENKRLVKQTQDLQSSSAQSSGLGASLTESIISMTNHELHSALSDTQVLQRLKEQIYKQRDELKHRERELQDKYSELEHLNIQAERLKASERDTRRRHKLMQAQVKTLCEERADFLAQLQDQSREINQLRKRLGLAEKENEDLVASYDDGQNDPNRPRYTTRELKELISERDELLTTIDTLNEQLAELKPPSQAKGKRQRHFSSSDDSDEDDDGHVADNDDDDDEEEAAAEANELEPPAAGETPPGHDAPVQGPLPYEPDDAPWKKSSESGIRKFFRKLFSDPSDGSNTFPKRSLATLSKMALSATPGSVSASAAAK</sequence>
<keyword id="KW-0175">Coiled coil</keyword>
<keyword id="KW-0458">Lysosome</keyword>
<keyword id="KW-0472">Membrane</keyword>
<keyword id="KW-1185">Reference proteome</keyword>
<protein>
    <recommendedName>
        <fullName evidence="7">RILP-like protein homolog</fullName>
    </recommendedName>
    <alternativeName>
        <fullName evidence="6 8">Rab-interacting lysosomal protein-like</fullName>
    </alternativeName>
</protein>
<reference key="1">
    <citation type="journal article" date="2000" name="Science">
        <title>The genome sequence of Drosophila melanogaster.</title>
        <authorList>
            <person name="Adams M.D."/>
            <person name="Celniker S.E."/>
            <person name="Holt R.A."/>
            <person name="Evans C.A."/>
            <person name="Gocayne J.D."/>
            <person name="Amanatides P.G."/>
            <person name="Scherer S.E."/>
            <person name="Li P.W."/>
            <person name="Hoskins R.A."/>
            <person name="Galle R.F."/>
            <person name="George R.A."/>
            <person name="Lewis S.E."/>
            <person name="Richards S."/>
            <person name="Ashburner M."/>
            <person name="Henderson S.N."/>
            <person name="Sutton G.G."/>
            <person name="Wortman J.R."/>
            <person name="Yandell M.D."/>
            <person name="Zhang Q."/>
            <person name="Chen L.X."/>
            <person name="Brandon R.C."/>
            <person name="Rogers Y.-H.C."/>
            <person name="Blazej R.G."/>
            <person name="Champe M."/>
            <person name="Pfeiffer B.D."/>
            <person name="Wan K.H."/>
            <person name="Doyle C."/>
            <person name="Baxter E.G."/>
            <person name="Helt G."/>
            <person name="Nelson C.R."/>
            <person name="Miklos G.L.G."/>
            <person name="Abril J.F."/>
            <person name="Agbayani A."/>
            <person name="An H.-J."/>
            <person name="Andrews-Pfannkoch C."/>
            <person name="Baldwin D."/>
            <person name="Ballew R.M."/>
            <person name="Basu A."/>
            <person name="Baxendale J."/>
            <person name="Bayraktaroglu L."/>
            <person name="Beasley E.M."/>
            <person name="Beeson K.Y."/>
            <person name="Benos P.V."/>
            <person name="Berman B.P."/>
            <person name="Bhandari D."/>
            <person name="Bolshakov S."/>
            <person name="Borkova D."/>
            <person name="Botchan M.R."/>
            <person name="Bouck J."/>
            <person name="Brokstein P."/>
            <person name="Brottier P."/>
            <person name="Burtis K.C."/>
            <person name="Busam D.A."/>
            <person name="Butler H."/>
            <person name="Cadieu E."/>
            <person name="Center A."/>
            <person name="Chandra I."/>
            <person name="Cherry J.M."/>
            <person name="Cawley S."/>
            <person name="Dahlke C."/>
            <person name="Davenport L.B."/>
            <person name="Davies P."/>
            <person name="de Pablos B."/>
            <person name="Delcher A."/>
            <person name="Deng Z."/>
            <person name="Mays A.D."/>
            <person name="Dew I."/>
            <person name="Dietz S.M."/>
            <person name="Dodson K."/>
            <person name="Doup L.E."/>
            <person name="Downes M."/>
            <person name="Dugan-Rocha S."/>
            <person name="Dunkov B.C."/>
            <person name="Dunn P."/>
            <person name="Durbin K.J."/>
            <person name="Evangelista C.C."/>
            <person name="Ferraz C."/>
            <person name="Ferriera S."/>
            <person name="Fleischmann W."/>
            <person name="Fosler C."/>
            <person name="Gabrielian A.E."/>
            <person name="Garg N.S."/>
            <person name="Gelbart W.M."/>
            <person name="Glasser K."/>
            <person name="Glodek A."/>
            <person name="Gong F."/>
            <person name="Gorrell J.H."/>
            <person name="Gu Z."/>
            <person name="Guan P."/>
            <person name="Harris M."/>
            <person name="Harris N.L."/>
            <person name="Harvey D.A."/>
            <person name="Heiman T.J."/>
            <person name="Hernandez J.R."/>
            <person name="Houck J."/>
            <person name="Hostin D."/>
            <person name="Houston K.A."/>
            <person name="Howland T.J."/>
            <person name="Wei M.-H."/>
            <person name="Ibegwam C."/>
            <person name="Jalali M."/>
            <person name="Kalush F."/>
            <person name="Karpen G.H."/>
            <person name="Ke Z."/>
            <person name="Kennison J.A."/>
            <person name="Ketchum K.A."/>
            <person name="Kimmel B.E."/>
            <person name="Kodira C.D."/>
            <person name="Kraft C.L."/>
            <person name="Kravitz S."/>
            <person name="Kulp D."/>
            <person name="Lai Z."/>
            <person name="Lasko P."/>
            <person name="Lei Y."/>
            <person name="Levitsky A.A."/>
            <person name="Li J.H."/>
            <person name="Li Z."/>
            <person name="Liang Y."/>
            <person name="Lin X."/>
            <person name="Liu X."/>
            <person name="Mattei B."/>
            <person name="McIntosh T.C."/>
            <person name="McLeod M.P."/>
            <person name="McPherson D."/>
            <person name="Merkulov G."/>
            <person name="Milshina N.V."/>
            <person name="Mobarry C."/>
            <person name="Morris J."/>
            <person name="Moshrefi A."/>
            <person name="Mount S.M."/>
            <person name="Moy M."/>
            <person name="Murphy B."/>
            <person name="Murphy L."/>
            <person name="Muzny D.M."/>
            <person name="Nelson D.L."/>
            <person name="Nelson D.R."/>
            <person name="Nelson K.A."/>
            <person name="Nixon K."/>
            <person name="Nusskern D.R."/>
            <person name="Pacleb J.M."/>
            <person name="Palazzolo M."/>
            <person name="Pittman G.S."/>
            <person name="Pan S."/>
            <person name="Pollard J."/>
            <person name="Puri V."/>
            <person name="Reese M.G."/>
            <person name="Reinert K."/>
            <person name="Remington K."/>
            <person name="Saunders R.D.C."/>
            <person name="Scheeler F."/>
            <person name="Shen H."/>
            <person name="Shue B.C."/>
            <person name="Siden-Kiamos I."/>
            <person name="Simpson M."/>
            <person name="Skupski M.P."/>
            <person name="Smith T.J."/>
            <person name="Spier E."/>
            <person name="Spradling A.C."/>
            <person name="Stapleton M."/>
            <person name="Strong R."/>
            <person name="Sun E."/>
            <person name="Svirskas R."/>
            <person name="Tector C."/>
            <person name="Turner R."/>
            <person name="Venter E."/>
            <person name="Wang A.H."/>
            <person name="Wang X."/>
            <person name="Wang Z.-Y."/>
            <person name="Wassarman D.A."/>
            <person name="Weinstock G.M."/>
            <person name="Weissenbach J."/>
            <person name="Williams S.M."/>
            <person name="Woodage T."/>
            <person name="Worley K.C."/>
            <person name="Wu D."/>
            <person name="Yang S."/>
            <person name="Yao Q.A."/>
            <person name="Ye J."/>
            <person name="Yeh R.-F."/>
            <person name="Zaveri J.S."/>
            <person name="Zhan M."/>
            <person name="Zhang G."/>
            <person name="Zhao Q."/>
            <person name="Zheng L."/>
            <person name="Zheng X.H."/>
            <person name="Zhong F.N."/>
            <person name="Zhong W."/>
            <person name="Zhou X."/>
            <person name="Zhu S.C."/>
            <person name="Zhu X."/>
            <person name="Smith H.O."/>
            <person name="Gibbs R.A."/>
            <person name="Myers E.W."/>
            <person name="Rubin G.M."/>
            <person name="Venter J.C."/>
        </authorList>
    </citation>
    <scope>NUCLEOTIDE SEQUENCE [LARGE SCALE GENOMIC DNA]</scope>
    <source>
        <strain>Berkeley</strain>
    </source>
</reference>
<reference key="2">
    <citation type="journal article" date="2002" name="Genome Biol.">
        <title>Annotation of the Drosophila melanogaster euchromatic genome: a systematic review.</title>
        <authorList>
            <person name="Misra S."/>
            <person name="Crosby M.A."/>
            <person name="Mungall C.J."/>
            <person name="Matthews B.B."/>
            <person name="Campbell K.S."/>
            <person name="Hradecky P."/>
            <person name="Huang Y."/>
            <person name="Kaminker J.S."/>
            <person name="Millburn G.H."/>
            <person name="Prochnik S.E."/>
            <person name="Smith C.D."/>
            <person name="Tupy J.L."/>
            <person name="Whitfield E.J."/>
            <person name="Bayraktaroglu L."/>
            <person name="Berman B.P."/>
            <person name="Bettencourt B.R."/>
            <person name="Celniker S.E."/>
            <person name="de Grey A.D.N.J."/>
            <person name="Drysdale R.A."/>
            <person name="Harris N.L."/>
            <person name="Richter J."/>
            <person name="Russo S."/>
            <person name="Schroeder A.J."/>
            <person name="Shu S.Q."/>
            <person name="Stapleton M."/>
            <person name="Yamada C."/>
            <person name="Ashburner M."/>
            <person name="Gelbart W.M."/>
            <person name="Rubin G.M."/>
            <person name="Lewis S.E."/>
        </authorList>
    </citation>
    <scope>GENOME REANNOTATION</scope>
    <source>
        <strain>Berkeley</strain>
    </source>
</reference>
<reference key="3">
    <citation type="journal article" date="2000" name="Science">
        <title>From sequence to chromosome: the tip of the X chromosome of D. melanogaster.</title>
        <authorList>
            <person name="Benos P.V."/>
            <person name="Gatt M.K."/>
            <person name="Ashburner M."/>
            <person name="Murphy L."/>
            <person name="Harris D."/>
            <person name="Barrell B.G."/>
            <person name="Ferraz C."/>
            <person name="Vidal S."/>
            <person name="Brun C."/>
            <person name="Demailles J."/>
            <person name="Cadieu E."/>
            <person name="Dreano S."/>
            <person name="Gloux S."/>
            <person name="Lelaure V."/>
            <person name="Mottier S."/>
            <person name="Galibert F."/>
            <person name="Borkova D."/>
            <person name="Minana B."/>
            <person name="Kafatos F.C."/>
            <person name="Louis C."/>
            <person name="Siden-Kiamos I."/>
            <person name="Bolshakov S."/>
            <person name="Papagiannakis G."/>
            <person name="Spanos L."/>
            <person name="Cox S."/>
            <person name="Madueno E."/>
            <person name="de Pablos B."/>
            <person name="Modolell J."/>
            <person name="Peter A."/>
            <person name="Schoettler P."/>
            <person name="Werner M."/>
            <person name="Mourkioti F."/>
            <person name="Beinert N."/>
            <person name="Dowe G."/>
            <person name="Schaefer U."/>
            <person name="Jaeckle H."/>
            <person name="Bucheton A."/>
            <person name="Callister D.M."/>
            <person name="Campbell L.A."/>
            <person name="Darlamitsou A."/>
            <person name="Henderson N.S."/>
            <person name="McMillan P.J."/>
            <person name="Salles C."/>
            <person name="Tait E.A."/>
            <person name="Valenti P."/>
            <person name="Saunders R.D.C."/>
            <person name="Glover D.M."/>
        </authorList>
    </citation>
    <scope>NUCLEOTIDE SEQUENCE [LARGE SCALE GENOMIC DNA]</scope>
    <source>
        <strain>Oregon-R</strain>
    </source>
</reference>
<reference key="4">
    <citation type="journal article" date="2002" name="Genome Biol.">
        <title>A Drosophila full-length cDNA resource.</title>
        <authorList>
            <person name="Stapleton M."/>
            <person name="Carlson J.W."/>
            <person name="Brokstein P."/>
            <person name="Yu C."/>
            <person name="Champe M."/>
            <person name="George R.A."/>
            <person name="Guarin H."/>
            <person name="Kronmiller B."/>
            <person name="Pacleb J.M."/>
            <person name="Park S."/>
            <person name="Wan K.H."/>
            <person name="Rubin G.M."/>
            <person name="Celniker S.E."/>
        </authorList>
    </citation>
    <scope>NUCLEOTIDE SEQUENCE [LARGE SCALE MRNA]</scope>
    <source>
        <strain>Berkeley</strain>
        <tissue>Head</tissue>
    </source>
</reference>
<reference key="5">
    <citation type="journal article" date="2018" name="Biol. Open">
        <title>The small G protein Arl8 contributes to lysosomal function and long-range axonal transport in Drosophila.</title>
        <authorList>
            <person name="Rosa-Ferreira C."/>
            <person name="Sweeney S.T."/>
            <person name="Munro S."/>
        </authorList>
    </citation>
    <scope>FUNCTION</scope>
    <scope>INTERACTION WITH ARL8</scope>
    <scope>SUBCELLULAR LOCATION</scope>
</reference>
<accession>O76878</accession>
<feature type="chain" id="PRO_0000299315" description="RILP-like protein homolog">
    <location>
        <begin position="1"/>
        <end position="443"/>
    </location>
</feature>
<feature type="domain" description="RH1" evidence="2">
    <location>
        <begin position="8"/>
        <end position="96"/>
    </location>
</feature>
<feature type="domain" description="RH2" evidence="3">
    <location>
        <begin position="282"/>
        <end position="401"/>
    </location>
</feature>
<feature type="region of interest" description="Disordered" evidence="4">
    <location>
        <begin position="311"/>
        <end position="394"/>
    </location>
</feature>
<feature type="coiled-coil region" evidence="1">
    <location>
        <begin position="59"/>
        <end position="315"/>
    </location>
</feature>
<feature type="compositionally biased region" description="Acidic residues" evidence="4">
    <location>
        <begin position="332"/>
        <end position="355"/>
    </location>
</feature>
<feature type="compositionally biased region" description="Low complexity" evidence="4">
    <location>
        <begin position="356"/>
        <end position="368"/>
    </location>
</feature>